<reference key="1">
    <citation type="journal article" date="2009" name="PLoS Genet.">
        <title>Organised genome dynamics in the Escherichia coli species results in highly diverse adaptive paths.</title>
        <authorList>
            <person name="Touchon M."/>
            <person name="Hoede C."/>
            <person name="Tenaillon O."/>
            <person name="Barbe V."/>
            <person name="Baeriswyl S."/>
            <person name="Bidet P."/>
            <person name="Bingen E."/>
            <person name="Bonacorsi S."/>
            <person name="Bouchier C."/>
            <person name="Bouvet O."/>
            <person name="Calteau A."/>
            <person name="Chiapello H."/>
            <person name="Clermont O."/>
            <person name="Cruveiller S."/>
            <person name="Danchin A."/>
            <person name="Diard M."/>
            <person name="Dossat C."/>
            <person name="Karoui M.E."/>
            <person name="Frapy E."/>
            <person name="Garry L."/>
            <person name="Ghigo J.M."/>
            <person name="Gilles A.M."/>
            <person name="Johnson J."/>
            <person name="Le Bouguenec C."/>
            <person name="Lescat M."/>
            <person name="Mangenot S."/>
            <person name="Martinez-Jehanne V."/>
            <person name="Matic I."/>
            <person name="Nassif X."/>
            <person name="Oztas S."/>
            <person name="Petit M.A."/>
            <person name="Pichon C."/>
            <person name="Rouy Z."/>
            <person name="Ruf C.S."/>
            <person name="Schneider D."/>
            <person name="Tourret J."/>
            <person name="Vacherie B."/>
            <person name="Vallenet D."/>
            <person name="Medigue C."/>
            <person name="Rocha E.P.C."/>
            <person name="Denamur E."/>
        </authorList>
    </citation>
    <scope>NUCLEOTIDE SEQUENCE [LARGE SCALE GENOMIC DNA]</scope>
    <source>
        <strain>S88 / ExPEC</strain>
    </source>
</reference>
<name>SYP_ECO45</name>
<keyword id="KW-0030">Aminoacyl-tRNA synthetase</keyword>
<keyword id="KW-0067">ATP-binding</keyword>
<keyword id="KW-0963">Cytoplasm</keyword>
<keyword id="KW-0436">Ligase</keyword>
<keyword id="KW-0547">Nucleotide-binding</keyword>
<keyword id="KW-0648">Protein biosynthesis</keyword>
<keyword id="KW-1185">Reference proteome</keyword>
<feature type="chain" id="PRO_1000199382" description="Proline--tRNA ligase">
    <location>
        <begin position="1"/>
        <end position="572"/>
    </location>
</feature>
<accession>B7MBH6</accession>
<proteinExistence type="inferred from homology"/>
<evidence type="ECO:0000255" key="1">
    <source>
        <dbReference type="HAMAP-Rule" id="MF_01569"/>
    </source>
</evidence>
<dbReference type="EC" id="6.1.1.15" evidence="1"/>
<dbReference type="EMBL" id="CU928161">
    <property type="protein sequence ID" value="CAR01570.1"/>
    <property type="molecule type" value="Genomic_DNA"/>
</dbReference>
<dbReference type="RefSeq" id="WP_001260694.1">
    <property type="nucleotide sequence ID" value="NC_011742.1"/>
</dbReference>
<dbReference type="SMR" id="B7MBH6"/>
<dbReference type="KEGG" id="ecz:ECS88_0206"/>
<dbReference type="HOGENOM" id="CLU_016739_0_0_6"/>
<dbReference type="Proteomes" id="UP000000747">
    <property type="component" value="Chromosome"/>
</dbReference>
<dbReference type="GO" id="GO:0005829">
    <property type="term" value="C:cytosol"/>
    <property type="evidence" value="ECO:0007669"/>
    <property type="project" value="TreeGrafter"/>
</dbReference>
<dbReference type="GO" id="GO:0002161">
    <property type="term" value="F:aminoacyl-tRNA deacylase activity"/>
    <property type="evidence" value="ECO:0007669"/>
    <property type="project" value="InterPro"/>
</dbReference>
<dbReference type="GO" id="GO:0005524">
    <property type="term" value="F:ATP binding"/>
    <property type="evidence" value="ECO:0007669"/>
    <property type="project" value="UniProtKB-UniRule"/>
</dbReference>
<dbReference type="GO" id="GO:0004827">
    <property type="term" value="F:proline-tRNA ligase activity"/>
    <property type="evidence" value="ECO:0007669"/>
    <property type="project" value="UniProtKB-UniRule"/>
</dbReference>
<dbReference type="GO" id="GO:0006433">
    <property type="term" value="P:prolyl-tRNA aminoacylation"/>
    <property type="evidence" value="ECO:0007669"/>
    <property type="project" value="UniProtKB-UniRule"/>
</dbReference>
<dbReference type="CDD" id="cd04334">
    <property type="entry name" value="ProRS-INS"/>
    <property type="match status" value="1"/>
</dbReference>
<dbReference type="CDD" id="cd00861">
    <property type="entry name" value="ProRS_anticodon_short"/>
    <property type="match status" value="1"/>
</dbReference>
<dbReference type="CDD" id="cd00779">
    <property type="entry name" value="ProRS_core_prok"/>
    <property type="match status" value="1"/>
</dbReference>
<dbReference type="FunFam" id="3.30.930.10:FF:000043">
    <property type="entry name" value="Proline--tRNA ligase"/>
    <property type="match status" value="1"/>
</dbReference>
<dbReference type="FunFam" id="3.30.930.10:FF:000097">
    <property type="entry name" value="Proline--tRNA ligase"/>
    <property type="match status" value="1"/>
</dbReference>
<dbReference type="FunFam" id="3.40.50.800:FF:000006">
    <property type="entry name" value="Proline--tRNA ligase"/>
    <property type="match status" value="1"/>
</dbReference>
<dbReference type="FunFam" id="3.90.960.10:FF:000001">
    <property type="entry name" value="Proline--tRNA ligase"/>
    <property type="match status" value="1"/>
</dbReference>
<dbReference type="Gene3D" id="3.40.50.800">
    <property type="entry name" value="Anticodon-binding domain"/>
    <property type="match status" value="1"/>
</dbReference>
<dbReference type="Gene3D" id="3.30.930.10">
    <property type="entry name" value="Bira Bifunctional Protein, Domain 2"/>
    <property type="match status" value="2"/>
</dbReference>
<dbReference type="Gene3D" id="3.90.960.10">
    <property type="entry name" value="YbaK/aminoacyl-tRNA synthetase-associated domain"/>
    <property type="match status" value="1"/>
</dbReference>
<dbReference type="HAMAP" id="MF_01569">
    <property type="entry name" value="Pro_tRNA_synth_type1"/>
    <property type="match status" value="1"/>
</dbReference>
<dbReference type="InterPro" id="IPR002314">
    <property type="entry name" value="aa-tRNA-synt_IIb"/>
</dbReference>
<dbReference type="InterPro" id="IPR006195">
    <property type="entry name" value="aa-tRNA-synth_II"/>
</dbReference>
<dbReference type="InterPro" id="IPR045864">
    <property type="entry name" value="aa-tRNA-synth_II/BPL/LPL"/>
</dbReference>
<dbReference type="InterPro" id="IPR004154">
    <property type="entry name" value="Anticodon-bd"/>
</dbReference>
<dbReference type="InterPro" id="IPR036621">
    <property type="entry name" value="Anticodon-bd_dom_sf"/>
</dbReference>
<dbReference type="InterPro" id="IPR002316">
    <property type="entry name" value="Pro-tRNA-ligase_IIa"/>
</dbReference>
<dbReference type="InterPro" id="IPR004500">
    <property type="entry name" value="Pro-tRNA-synth_IIa_bac-type"/>
</dbReference>
<dbReference type="InterPro" id="IPR023717">
    <property type="entry name" value="Pro-tRNA-Synthase_IIa_type1"/>
</dbReference>
<dbReference type="InterPro" id="IPR050062">
    <property type="entry name" value="Pro-tRNA_synthetase"/>
</dbReference>
<dbReference type="InterPro" id="IPR044140">
    <property type="entry name" value="ProRS_anticodon_short"/>
</dbReference>
<dbReference type="InterPro" id="IPR033730">
    <property type="entry name" value="ProRS_core_prok"/>
</dbReference>
<dbReference type="InterPro" id="IPR036754">
    <property type="entry name" value="YbaK/aa-tRNA-synt-asso_dom_sf"/>
</dbReference>
<dbReference type="InterPro" id="IPR007214">
    <property type="entry name" value="YbaK/aa-tRNA-synth-assoc-dom"/>
</dbReference>
<dbReference type="NCBIfam" id="NF006625">
    <property type="entry name" value="PRK09194.1"/>
    <property type="match status" value="1"/>
</dbReference>
<dbReference type="NCBIfam" id="TIGR00409">
    <property type="entry name" value="proS_fam_II"/>
    <property type="match status" value="1"/>
</dbReference>
<dbReference type="PANTHER" id="PTHR42753">
    <property type="entry name" value="MITOCHONDRIAL RIBOSOME PROTEIN L39/PROLYL-TRNA LIGASE FAMILY MEMBER"/>
    <property type="match status" value="1"/>
</dbReference>
<dbReference type="PANTHER" id="PTHR42753:SF2">
    <property type="entry name" value="PROLINE--TRNA LIGASE"/>
    <property type="match status" value="1"/>
</dbReference>
<dbReference type="Pfam" id="PF03129">
    <property type="entry name" value="HGTP_anticodon"/>
    <property type="match status" value="1"/>
</dbReference>
<dbReference type="Pfam" id="PF00587">
    <property type="entry name" value="tRNA-synt_2b"/>
    <property type="match status" value="1"/>
</dbReference>
<dbReference type="Pfam" id="PF04073">
    <property type="entry name" value="tRNA_edit"/>
    <property type="match status" value="1"/>
</dbReference>
<dbReference type="PIRSF" id="PIRSF001535">
    <property type="entry name" value="ProRS_1"/>
    <property type="match status" value="1"/>
</dbReference>
<dbReference type="PRINTS" id="PR01046">
    <property type="entry name" value="TRNASYNTHPRO"/>
</dbReference>
<dbReference type="SUPFAM" id="SSF52954">
    <property type="entry name" value="Class II aaRS ABD-related"/>
    <property type="match status" value="1"/>
</dbReference>
<dbReference type="SUPFAM" id="SSF55681">
    <property type="entry name" value="Class II aaRS and biotin synthetases"/>
    <property type="match status" value="1"/>
</dbReference>
<dbReference type="SUPFAM" id="SSF55826">
    <property type="entry name" value="YbaK/ProRS associated domain"/>
    <property type="match status" value="1"/>
</dbReference>
<dbReference type="PROSITE" id="PS50862">
    <property type="entry name" value="AA_TRNA_LIGASE_II"/>
    <property type="match status" value="1"/>
</dbReference>
<gene>
    <name evidence="1" type="primary">proS</name>
    <name type="ordered locus">ECS88_0206</name>
</gene>
<comment type="function">
    <text evidence="1">Catalyzes the attachment of proline to tRNA(Pro) in a two-step reaction: proline is first activated by ATP to form Pro-AMP and then transferred to the acceptor end of tRNA(Pro). As ProRS can inadvertently accommodate and process non-cognate amino acids such as alanine and cysteine, to avoid such errors it has two additional distinct editing activities against alanine. One activity is designated as 'pretransfer' editing and involves the tRNA(Pro)-independent hydrolysis of activated Ala-AMP. The other activity is designated 'posttransfer' editing and involves deacylation of mischarged Ala-tRNA(Pro). The misacylated Cys-tRNA(Pro) is not edited by ProRS.</text>
</comment>
<comment type="catalytic activity">
    <reaction evidence="1">
        <text>tRNA(Pro) + L-proline + ATP = L-prolyl-tRNA(Pro) + AMP + diphosphate</text>
        <dbReference type="Rhea" id="RHEA:14305"/>
        <dbReference type="Rhea" id="RHEA-COMP:9700"/>
        <dbReference type="Rhea" id="RHEA-COMP:9702"/>
        <dbReference type="ChEBI" id="CHEBI:30616"/>
        <dbReference type="ChEBI" id="CHEBI:33019"/>
        <dbReference type="ChEBI" id="CHEBI:60039"/>
        <dbReference type="ChEBI" id="CHEBI:78442"/>
        <dbReference type="ChEBI" id="CHEBI:78532"/>
        <dbReference type="ChEBI" id="CHEBI:456215"/>
        <dbReference type="EC" id="6.1.1.15"/>
    </reaction>
</comment>
<comment type="subunit">
    <text evidence="1">Homodimer.</text>
</comment>
<comment type="subcellular location">
    <subcellularLocation>
        <location evidence="1">Cytoplasm</location>
    </subcellularLocation>
</comment>
<comment type="domain">
    <text evidence="1">Consists of three domains: the N-terminal catalytic domain, the editing domain and the C-terminal anticodon-binding domain.</text>
</comment>
<comment type="similarity">
    <text evidence="1">Belongs to the class-II aminoacyl-tRNA synthetase family. ProS type 1 subfamily.</text>
</comment>
<sequence>MRTSQYLLSTLKETPADAEVISHQLMLRAGMIRKLASGLYTWLPTGVRVLKKVENIVREEMNNAGAIEVLMPVVQPSELWQESGRWEQYGPELLRIADRGDRPFVLGPTHEEVITDLIRNELSSYKQLPLNFYQIQTKFRDEVRPRFGVMRSREFLMKDAYSFHTSQESLQETYDAMYAAYSKIFSRMGLDFRAVQADTGSIGGSASHEFQVLAQSGEDDVVFSDTSDYAANIELAEAIAPKEPRAAATQEMTLVDTPNAKTIAELVEQFNLPIEKTVKTLLVKAVEGSSFPLVALLVRGDHELNEVKAEKLPQVASPLTFATEEEIRAVVKAGPGSLGPVNMPIPVVIDRTVAAMSDFAAGANIDGKHYFGINWDRDVATPEIADIRNVVAGDPSPDGQGTLLIKRGIEVGHIFQLGTKYSEALKASVQGEDGRNQILTMGCYGIGVTRVVAAAIEQNYDERGIVWPDAIAPFQVAILPMNMHKSFRVQELAEKLYSELRAQGIEVLLDDRKERPGVMFADMELIGIPHTIVLGDRNLDNDDIEYKYRRNGEKQLIKTGDIVDYLVKQIKG</sequence>
<protein>
    <recommendedName>
        <fullName evidence="1">Proline--tRNA ligase</fullName>
        <ecNumber evidence="1">6.1.1.15</ecNumber>
    </recommendedName>
    <alternativeName>
        <fullName evidence="1">Prolyl-tRNA synthetase</fullName>
        <shortName evidence="1">ProRS</shortName>
    </alternativeName>
</protein>
<organism>
    <name type="scientific">Escherichia coli O45:K1 (strain S88 / ExPEC)</name>
    <dbReference type="NCBI Taxonomy" id="585035"/>
    <lineage>
        <taxon>Bacteria</taxon>
        <taxon>Pseudomonadati</taxon>
        <taxon>Pseudomonadota</taxon>
        <taxon>Gammaproteobacteria</taxon>
        <taxon>Enterobacterales</taxon>
        <taxon>Enterobacteriaceae</taxon>
        <taxon>Escherichia</taxon>
    </lineage>
</organism>